<keyword id="KW-0067">ATP-binding</keyword>
<keyword id="KW-0963">Cytoplasm</keyword>
<keyword id="KW-0547">Nucleotide-binding</keyword>
<keyword id="KW-0694">RNA-binding</keyword>
<keyword id="KW-0784">Thiamine biosynthesis</keyword>
<keyword id="KW-0808">Transferase</keyword>
<keyword id="KW-0820">tRNA-binding</keyword>
<comment type="function">
    <text evidence="1">Catalyzes the ATP-dependent transfer of a sulfur to tRNA to produce 4-thiouridine in position 8 of tRNAs, which functions as a near-UV photosensor. Also catalyzes the transfer of sulfur to the sulfur carrier protein ThiS, forming ThiS-thiocarboxylate. This is a step in the synthesis of thiazole, in the thiamine biosynthesis pathway. The sulfur is donated as persulfide by IscS.</text>
</comment>
<comment type="catalytic activity">
    <reaction evidence="1">
        <text>[ThiI sulfur-carrier protein]-S-sulfanyl-L-cysteine + a uridine in tRNA + 2 reduced [2Fe-2S]-[ferredoxin] + ATP + H(+) = [ThiI sulfur-carrier protein]-L-cysteine + a 4-thiouridine in tRNA + 2 oxidized [2Fe-2S]-[ferredoxin] + AMP + diphosphate</text>
        <dbReference type="Rhea" id="RHEA:24176"/>
        <dbReference type="Rhea" id="RHEA-COMP:10000"/>
        <dbReference type="Rhea" id="RHEA-COMP:10001"/>
        <dbReference type="Rhea" id="RHEA-COMP:13337"/>
        <dbReference type="Rhea" id="RHEA-COMP:13338"/>
        <dbReference type="Rhea" id="RHEA-COMP:13339"/>
        <dbReference type="Rhea" id="RHEA-COMP:13340"/>
        <dbReference type="ChEBI" id="CHEBI:15378"/>
        <dbReference type="ChEBI" id="CHEBI:29950"/>
        <dbReference type="ChEBI" id="CHEBI:30616"/>
        <dbReference type="ChEBI" id="CHEBI:33019"/>
        <dbReference type="ChEBI" id="CHEBI:33737"/>
        <dbReference type="ChEBI" id="CHEBI:33738"/>
        <dbReference type="ChEBI" id="CHEBI:61963"/>
        <dbReference type="ChEBI" id="CHEBI:65315"/>
        <dbReference type="ChEBI" id="CHEBI:136798"/>
        <dbReference type="ChEBI" id="CHEBI:456215"/>
        <dbReference type="EC" id="2.8.1.4"/>
    </reaction>
</comment>
<comment type="catalytic activity">
    <reaction evidence="1">
        <text>[ThiS sulfur-carrier protein]-C-terminal Gly-Gly-AMP + S-sulfanyl-L-cysteinyl-[cysteine desulfurase] + AH2 = [ThiS sulfur-carrier protein]-C-terminal-Gly-aminoethanethioate + L-cysteinyl-[cysteine desulfurase] + A + AMP + 2 H(+)</text>
        <dbReference type="Rhea" id="RHEA:43340"/>
        <dbReference type="Rhea" id="RHEA-COMP:12157"/>
        <dbReference type="Rhea" id="RHEA-COMP:12158"/>
        <dbReference type="Rhea" id="RHEA-COMP:12910"/>
        <dbReference type="Rhea" id="RHEA-COMP:19908"/>
        <dbReference type="ChEBI" id="CHEBI:13193"/>
        <dbReference type="ChEBI" id="CHEBI:15378"/>
        <dbReference type="ChEBI" id="CHEBI:17499"/>
        <dbReference type="ChEBI" id="CHEBI:29950"/>
        <dbReference type="ChEBI" id="CHEBI:61963"/>
        <dbReference type="ChEBI" id="CHEBI:90618"/>
        <dbReference type="ChEBI" id="CHEBI:232372"/>
        <dbReference type="ChEBI" id="CHEBI:456215"/>
    </reaction>
</comment>
<comment type="pathway">
    <text evidence="1">Cofactor biosynthesis; thiamine diphosphate biosynthesis.</text>
</comment>
<comment type="subcellular location">
    <subcellularLocation>
        <location evidence="1">Cytoplasm</location>
    </subcellularLocation>
</comment>
<comment type="similarity">
    <text evidence="1">Belongs to the ThiI family.</text>
</comment>
<protein>
    <recommendedName>
        <fullName evidence="1">Probable tRNA sulfurtransferase</fullName>
        <ecNumber evidence="1">2.8.1.4</ecNumber>
    </recommendedName>
    <alternativeName>
        <fullName evidence="1">Sulfur carrier protein ThiS sulfurtransferase</fullName>
    </alternativeName>
    <alternativeName>
        <fullName evidence="1">Thiamine biosynthesis protein ThiI</fullName>
    </alternativeName>
    <alternativeName>
        <fullName evidence="1">tRNA 4-thiouridine synthase</fullName>
    </alternativeName>
</protein>
<gene>
    <name evidence="1" type="primary">thiI</name>
    <name type="ordered locus">BCA_4762</name>
</gene>
<feature type="chain" id="PRO_1000196920" description="Probable tRNA sulfurtransferase">
    <location>
        <begin position="1"/>
        <end position="404"/>
    </location>
</feature>
<feature type="domain" description="THUMP" evidence="1">
    <location>
        <begin position="61"/>
        <end position="166"/>
    </location>
</feature>
<feature type="binding site" evidence="1">
    <location>
        <begin position="184"/>
        <end position="185"/>
    </location>
    <ligand>
        <name>ATP</name>
        <dbReference type="ChEBI" id="CHEBI:30616"/>
    </ligand>
</feature>
<feature type="binding site" evidence="1">
    <location>
        <begin position="209"/>
        <end position="210"/>
    </location>
    <ligand>
        <name>ATP</name>
        <dbReference type="ChEBI" id="CHEBI:30616"/>
    </ligand>
</feature>
<feature type="binding site" evidence="1">
    <location>
        <position position="266"/>
    </location>
    <ligand>
        <name>ATP</name>
        <dbReference type="ChEBI" id="CHEBI:30616"/>
    </ligand>
</feature>
<feature type="binding site" evidence="1">
    <location>
        <position position="288"/>
    </location>
    <ligand>
        <name>ATP</name>
        <dbReference type="ChEBI" id="CHEBI:30616"/>
    </ligand>
</feature>
<feature type="binding site" evidence="1">
    <location>
        <position position="297"/>
    </location>
    <ligand>
        <name>ATP</name>
        <dbReference type="ChEBI" id="CHEBI:30616"/>
    </ligand>
</feature>
<proteinExistence type="inferred from homology"/>
<evidence type="ECO:0000255" key="1">
    <source>
        <dbReference type="HAMAP-Rule" id="MF_00021"/>
    </source>
</evidence>
<accession>C1EUZ5</accession>
<reference key="1">
    <citation type="submission" date="2009-02" db="EMBL/GenBank/DDBJ databases">
        <title>Genome sequence of Bacillus cereus 03BB102.</title>
        <authorList>
            <person name="Dodson R.J."/>
            <person name="Jackson P."/>
            <person name="Munk A.C."/>
            <person name="Brettin T."/>
            <person name="Bruce D."/>
            <person name="Detter C."/>
            <person name="Tapia R."/>
            <person name="Han C."/>
            <person name="Sutton G."/>
            <person name="Sims D."/>
        </authorList>
    </citation>
    <scope>NUCLEOTIDE SEQUENCE [LARGE SCALE GENOMIC DNA]</scope>
    <source>
        <strain>03BB102</strain>
    </source>
</reference>
<sequence>MMTYEYILVRYGEMTTKGKNRSKFVSTLKDNVKFKLKKFPNIKIDATHDRMYIQLNGEDHEAVSERLKDVFGIHKFNLAMKVPSELEDIKKGALAAFLQVKGDVKTFKITVHRSYKHFPMRTMELLPEIGGHILENTEDITVDVHNPDVNVRVEIRSGYSYIMCDERMGAGGLPVGVGGKVMVLLSGGIDSPVAAYLTMKRGVSVEAVHFHSPPFTSERAKQKVIDLAQELTKYCKRVTLHLVPFTEVQKTINKEIPSSYSMTVMRRMMMRITERIAEERNALAITTGESLGQVASQTLDSMHTINEVTNYPVIRPLITMDKLEIIKIAEEIGTYDISIRPYEDCCTVFTPASPATKPKREKANRFEAKYDFTPLIDEAVANKETMVLQTVEVVAEEEKFEELF</sequence>
<name>THII_BACC3</name>
<organism>
    <name type="scientific">Bacillus cereus (strain 03BB102)</name>
    <dbReference type="NCBI Taxonomy" id="572264"/>
    <lineage>
        <taxon>Bacteria</taxon>
        <taxon>Bacillati</taxon>
        <taxon>Bacillota</taxon>
        <taxon>Bacilli</taxon>
        <taxon>Bacillales</taxon>
        <taxon>Bacillaceae</taxon>
        <taxon>Bacillus</taxon>
        <taxon>Bacillus cereus group</taxon>
    </lineage>
</organism>
<dbReference type="EC" id="2.8.1.4" evidence="1"/>
<dbReference type="EMBL" id="CP001407">
    <property type="protein sequence ID" value="ACO31207.1"/>
    <property type="molecule type" value="Genomic_DNA"/>
</dbReference>
<dbReference type="RefSeq" id="WP_000989283.1">
    <property type="nucleotide sequence ID" value="NZ_CP009318.1"/>
</dbReference>
<dbReference type="SMR" id="C1EUZ5"/>
<dbReference type="GeneID" id="45024520"/>
<dbReference type="KEGG" id="bcx:BCA_4762"/>
<dbReference type="PATRIC" id="fig|572264.18.peg.4711"/>
<dbReference type="UniPathway" id="UPA00060"/>
<dbReference type="Proteomes" id="UP000002210">
    <property type="component" value="Chromosome"/>
</dbReference>
<dbReference type="GO" id="GO:0005829">
    <property type="term" value="C:cytosol"/>
    <property type="evidence" value="ECO:0007669"/>
    <property type="project" value="TreeGrafter"/>
</dbReference>
<dbReference type="GO" id="GO:0005524">
    <property type="term" value="F:ATP binding"/>
    <property type="evidence" value="ECO:0007669"/>
    <property type="project" value="UniProtKB-UniRule"/>
</dbReference>
<dbReference type="GO" id="GO:0004810">
    <property type="term" value="F:CCA tRNA nucleotidyltransferase activity"/>
    <property type="evidence" value="ECO:0007669"/>
    <property type="project" value="InterPro"/>
</dbReference>
<dbReference type="GO" id="GO:0000049">
    <property type="term" value="F:tRNA binding"/>
    <property type="evidence" value="ECO:0007669"/>
    <property type="project" value="UniProtKB-UniRule"/>
</dbReference>
<dbReference type="GO" id="GO:0140741">
    <property type="term" value="F:tRNA-uracil-4 sulfurtransferase activity"/>
    <property type="evidence" value="ECO:0007669"/>
    <property type="project" value="UniProtKB-EC"/>
</dbReference>
<dbReference type="GO" id="GO:0009228">
    <property type="term" value="P:thiamine biosynthetic process"/>
    <property type="evidence" value="ECO:0007669"/>
    <property type="project" value="UniProtKB-KW"/>
</dbReference>
<dbReference type="GO" id="GO:0009229">
    <property type="term" value="P:thiamine diphosphate biosynthetic process"/>
    <property type="evidence" value="ECO:0007669"/>
    <property type="project" value="UniProtKB-UniRule"/>
</dbReference>
<dbReference type="GO" id="GO:0052837">
    <property type="term" value="P:thiazole biosynthetic process"/>
    <property type="evidence" value="ECO:0007669"/>
    <property type="project" value="TreeGrafter"/>
</dbReference>
<dbReference type="GO" id="GO:0002937">
    <property type="term" value="P:tRNA 4-thiouridine biosynthesis"/>
    <property type="evidence" value="ECO:0007669"/>
    <property type="project" value="TreeGrafter"/>
</dbReference>
<dbReference type="CDD" id="cd01712">
    <property type="entry name" value="PPase_ThiI"/>
    <property type="match status" value="1"/>
</dbReference>
<dbReference type="CDD" id="cd11716">
    <property type="entry name" value="THUMP_ThiI"/>
    <property type="match status" value="1"/>
</dbReference>
<dbReference type="FunFam" id="3.30.2130.30:FF:000003">
    <property type="entry name" value="Probable tRNA sulfurtransferase"/>
    <property type="match status" value="1"/>
</dbReference>
<dbReference type="FunFam" id="3.40.50.620:FF:000053">
    <property type="entry name" value="Probable tRNA sulfurtransferase"/>
    <property type="match status" value="1"/>
</dbReference>
<dbReference type="Gene3D" id="3.30.2130.30">
    <property type="match status" value="1"/>
</dbReference>
<dbReference type="Gene3D" id="3.40.50.620">
    <property type="entry name" value="HUPs"/>
    <property type="match status" value="1"/>
</dbReference>
<dbReference type="HAMAP" id="MF_00021">
    <property type="entry name" value="ThiI"/>
    <property type="match status" value="1"/>
</dbReference>
<dbReference type="InterPro" id="IPR014729">
    <property type="entry name" value="Rossmann-like_a/b/a_fold"/>
</dbReference>
<dbReference type="InterPro" id="IPR020536">
    <property type="entry name" value="ThiI_AANH"/>
</dbReference>
<dbReference type="InterPro" id="IPR054173">
    <property type="entry name" value="ThiI_fer"/>
</dbReference>
<dbReference type="InterPro" id="IPR049961">
    <property type="entry name" value="ThiI_N"/>
</dbReference>
<dbReference type="InterPro" id="IPR004114">
    <property type="entry name" value="THUMP_dom"/>
</dbReference>
<dbReference type="InterPro" id="IPR049962">
    <property type="entry name" value="THUMP_ThiI"/>
</dbReference>
<dbReference type="InterPro" id="IPR003720">
    <property type="entry name" value="tRNA_STrfase"/>
</dbReference>
<dbReference type="InterPro" id="IPR050102">
    <property type="entry name" value="tRNA_sulfurtransferase_ThiI"/>
</dbReference>
<dbReference type="NCBIfam" id="TIGR00342">
    <property type="entry name" value="tRNA uracil 4-sulfurtransferase ThiI"/>
    <property type="match status" value="1"/>
</dbReference>
<dbReference type="PANTHER" id="PTHR43209">
    <property type="entry name" value="TRNA SULFURTRANSFERASE"/>
    <property type="match status" value="1"/>
</dbReference>
<dbReference type="PANTHER" id="PTHR43209:SF1">
    <property type="entry name" value="TRNA SULFURTRANSFERASE"/>
    <property type="match status" value="1"/>
</dbReference>
<dbReference type="Pfam" id="PF02568">
    <property type="entry name" value="ThiI"/>
    <property type="match status" value="1"/>
</dbReference>
<dbReference type="Pfam" id="PF22025">
    <property type="entry name" value="ThiI_fer"/>
    <property type="match status" value="1"/>
</dbReference>
<dbReference type="Pfam" id="PF02926">
    <property type="entry name" value="THUMP"/>
    <property type="match status" value="1"/>
</dbReference>
<dbReference type="SMART" id="SM00981">
    <property type="entry name" value="THUMP"/>
    <property type="match status" value="1"/>
</dbReference>
<dbReference type="SUPFAM" id="SSF52402">
    <property type="entry name" value="Adenine nucleotide alpha hydrolases-like"/>
    <property type="match status" value="1"/>
</dbReference>
<dbReference type="SUPFAM" id="SSF143437">
    <property type="entry name" value="THUMP domain-like"/>
    <property type="match status" value="1"/>
</dbReference>
<dbReference type="PROSITE" id="PS51165">
    <property type="entry name" value="THUMP"/>
    <property type="match status" value="1"/>
</dbReference>